<keyword id="KW-0229">DNA integration</keyword>
<keyword id="KW-0233">DNA recombination</keyword>
<keyword id="KW-0238">DNA-binding</keyword>
<keyword id="KW-0614">Plasmid</keyword>
<name>TNPT_PSEPU</name>
<geneLocation type="plasmid">
    <name>TOL pWW53</name>
</geneLocation>
<geneLocation type="plasmid">
    <name>TOL pDK1</name>
</geneLocation>
<organism>
    <name type="scientific">Pseudomonas putida</name>
    <name type="common">Arthrobacter siderocapsulatus</name>
    <dbReference type="NCBI Taxonomy" id="303"/>
    <lineage>
        <taxon>Bacteria</taxon>
        <taxon>Pseudomonadati</taxon>
        <taxon>Pseudomonadota</taxon>
        <taxon>Gammaproteobacteria</taxon>
        <taxon>Pseudomonadales</taxon>
        <taxon>Pseudomonadaceae</taxon>
        <taxon>Pseudomonas</taxon>
    </lineage>
</organism>
<protein>
    <recommendedName>
        <fullName>Resolvase/recombinase</fullName>
    </recommendedName>
</protein>
<proteinExistence type="inferred from homology"/>
<feature type="chain" id="PRO_0000196379" description="Resolvase/recombinase">
    <location>
        <begin position="1"/>
        <end position="181"/>
    </location>
</feature>
<feature type="domain" description="Resolvase/invertase-type recombinase catalytic" evidence="3">
    <location>
        <begin position="2"/>
        <end position="137"/>
    </location>
</feature>
<feature type="DNA-binding region" description="H-T-H motif" evidence="2">
    <location>
        <begin position="161"/>
        <end position="180"/>
    </location>
</feature>
<feature type="active site" description="O-(5'-phospho-DNA)-serine intermediate" evidence="3">
    <location>
        <position position="10"/>
    </location>
</feature>
<sequence length="181" mass="20121">MRLFGYARVSTSQQSLDVQIKALKAENVRATRIFTDKVSGSHVNREGLRMLRLKVEEGDVVLVKKLDRLGRDTADMIQLIKEFDDMGVAIRFLDDGISTEGTMGKMVVTILSAVAQAERLRILERTNEGRLEAKAKGVKFGRKPTVDKAEVFTLHGQGISAMEIAKRLKIGRSTVYKVLAS</sequence>
<accession>P30739</accession>
<evidence type="ECO:0000250" key="1"/>
<evidence type="ECO:0000255" key="2"/>
<evidence type="ECO:0000255" key="3">
    <source>
        <dbReference type="PROSITE-ProRule" id="PRU01072"/>
    </source>
</evidence>
<evidence type="ECO:0000305" key="4"/>
<dbReference type="EMBL" id="L02643">
    <property type="protein sequence ID" value="AAA71890.1"/>
    <property type="molecule type" value="Unassigned_DNA"/>
</dbReference>
<dbReference type="EMBL" id="L02642">
    <property type="protein sequence ID" value="AAA71888.1"/>
    <property type="molecule type" value="Unassigned_DNA"/>
</dbReference>
<dbReference type="PIR" id="S35485">
    <property type="entry name" value="S35485"/>
</dbReference>
<dbReference type="RefSeq" id="WP_004574810.1">
    <property type="nucleotide sequence ID" value="NZ_MING01000087.1"/>
</dbReference>
<dbReference type="RefSeq" id="YP_003617193.1">
    <property type="nucleotide sequence ID" value="NC_014124.1"/>
</dbReference>
<dbReference type="RefSeq" id="YP_709356.1">
    <property type="nucleotide sequence ID" value="NC_008275.1"/>
</dbReference>
<dbReference type="SMR" id="P30739"/>
<dbReference type="GO" id="GO:0003677">
    <property type="term" value="F:DNA binding"/>
    <property type="evidence" value="ECO:0007669"/>
    <property type="project" value="UniProtKB-KW"/>
</dbReference>
<dbReference type="GO" id="GO:0000150">
    <property type="term" value="F:DNA strand exchange activity"/>
    <property type="evidence" value="ECO:0007669"/>
    <property type="project" value="InterPro"/>
</dbReference>
<dbReference type="GO" id="GO:0015074">
    <property type="term" value="P:DNA integration"/>
    <property type="evidence" value="ECO:0007669"/>
    <property type="project" value="UniProtKB-KW"/>
</dbReference>
<dbReference type="CDD" id="cd03768">
    <property type="entry name" value="SR_ResInv"/>
    <property type="match status" value="1"/>
</dbReference>
<dbReference type="Gene3D" id="6.10.250.10">
    <property type="match status" value="1"/>
</dbReference>
<dbReference type="Gene3D" id="1.10.10.60">
    <property type="entry name" value="Homeodomain-like"/>
    <property type="match status" value="1"/>
</dbReference>
<dbReference type="Gene3D" id="3.40.50.1390">
    <property type="entry name" value="Resolvase, N-terminal catalytic domain"/>
    <property type="match status" value="1"/>
</dbReference>
<dbReference type="InterPro" id="IPR009057">
    <property type="entry name" value="Homeodomain-like_sf"/>
</dbReference>
<dbReference type="InterPro" id="IPR006118">
    <property type="entry name" value="Recombinase_CS"/>
</dbReference>
<dbReference type="InterPro" id="IPR006119">
    <property type="entry name" value="Resolv_N"/>
</dbReference>
<dbReference type="InterPro" id="IPR036162">
    <property type="entry name" value="Resolvase-like_N_sf"/>
</dbReference>
<dbReference type="InterPro" id="IPR006120">
    <property type="entry name" value="Resolvase_HTH_dom"/>
</dbReference>
<dbReference type="InterPro" id="IPR050639">
    <property type="entry name" value="SSR_resolvase"/>
</dbReference>
<dbReference type="PANTHER" id="PTHR30461">
    <property type="entry name" value="DNA-INVERTASE FROM LAMBDOID PROPHAGE"/>
    <property type="match status" value="1"/>
</dbReference>
<dbReference type="PANTHER" id="PTHR30461:SF26">
    <property type="entry name" value="RESOLVASE HOMOLOG YNEB"/>
    <property type="match status" value="1"/>
</dbReference>
<dbReference type="Pfam" id="PF02796">
    <property type="entry name" value="HTH_7"/>
    <property type="match status" value="1"/>
</dbReference>
<dbReference type="Pfam" id="PF00239">
    <property type="entry name" value="Resolvase"/>
    <property type="match status" value="1"/>
</dbReference>
<dbReference type="SMART" id="SM00857">
    <property type="entry name" value="Resolvase"/>
    <property type="match status" value="1"/>
</dbReference>
<dbReference type="SUPFAM" id="SSF46689">
    <property type="entry name" value="Homeodomain-like"/>
    <property type="match status" value="1"/>
</dbReference>
<dbReference type="SUPFAM" id="SSF53041">
    <property type="entry name" value="Resolvase-like"/>
    <property type="match status" value="1"/>
</dbReference>
<dbReference type="PROSITE" id="PS00397">
    <property type="entry name" value="RECOMBINASES_1"/>
    <property type="match status" value="1"/>
</dbReference>
<dbReference type="PROSITE" id="PS00398">
    <property type="entry name" value="RECOMBINASES_2"/>
    <property type="match status" value="1"/>
</dbReference>
<dbReference type="PROSITE" id="PS51736">
    <property type="entry name" value="RECOMBINASES_3"/>
    <property type="match status" value="1"/>
</dbReference>
<comment type="function">
    <text evidence="1">Site-specific recombination protein.</text>
</comment>
<comment type="similarity">
    <text evidence="4">Belongs to the site-specific recombinase resolvase family.</text>
</comment>
<reference key="1">
    <citation type="journal article" date="1992" name="Nucleic Acids Res.">
        <title>Identical resolvases are encoded by Pseudomonas TOL plasmids pWW53 and pDK1.</title>
        <authorList>
            <person name="Assinder S.J."/>
            <person name="de Marco P."/>
            <person name="Sayers J.R."/>
            <person name="Shaw L.E."/>
            <person name="Winson M.K."/>
            <person name="Williams P.A."/>
        </authorList>
    </citation>
    <scope>NUCLEOTIDE SEQUENCE [GENOMIC DNA]</scope>
    <source>
        <strain>HS1</strain>
        <strain>MT53</strain>
    </source>
</reference>